<dbReference type="EC" id="1.13.11.54" evidence="1"/>
<dbReference type="EC" id="1.13.11.53" evidence="1"/>
<dbReference type="EMBL" id="CP000774">
    <property type="protein sequence ID" value="ABS63470.1"/>
    <property type="molecule type" value="Genomic_DNA"/>
</dbReference>
<dbReference type="RefSeq" id="WP_012110763.1">
    <property type="nucleotide sequence ID" value="NC_009719.1"/>
</dbReference>
<dbReference type="SMR" id="A7HU87"/>
<dbReference type="STRING" id="402881.Plav_1853"/>
<dbReference type="KEGG" id="pla:Plav_1853"/>
<dbReference type="eggNOG" id="COG1791">
    <property type="taxonomic scope" value="Bacteria"/>
</dbReference>
<dbReference type="HOGENOM" id="CLU_125400_0_0_5"/>
<dbReference type="OrthoDB" id="9795636at2"/>
<dbReference type="UniPathway" id="UPA00904">
    <property type="reaction ID" value="UER00878"/>
</dbReference>
<dbReference type="Proteomes" id="UP000006377">
    <property type="component" value="Chromosome"/>
</dbReference>
<dbReference type="GO" id="GO:0010308">
    <property type="term" value="F:acireductone dioxygenase (Ni2+-requiring) activity"/>
    <property type="evidence" value="ECO:0007669"/>
    <property type="project" value="UniProtKB-UniRule"/>
</dbReference>
<dbReference type="GO" id="GO:0010309">
    <property type="term" value="F:acireductone dioxygenase [iron(II)-requiring] activity"/>
    <property type="evidence" value="ECO:0007669"/>
    <property type="project" value="UniProtKB-UniRule"/>
</dbReference>
<dbReference type="GO" id="GO:0005506">
    <property type="term" value="F:iron ion binding"/>
    <property type="evidence" value="ECO:0007669"/>
    <property type="project" value="UniProtKB-UniRule"/>
</dbReference>
<dbReference type="GO" id="GO:0016151">
    <property type="term" value="F:nickel cation binding"/>
    <property type="evidence" value="ECO:0007669"/>
    <property type="project" value="UniProtKB-UniRule"/>
</dbReference>
<dbReference type="GO" id="GO:0019509">
    <property type="term" value="P:L-methionine salvage from methylthioadenosine"/>
    <property type="evidence" value="ECO:0007669"/>
    <property type="project" value="UniProtKB-UniRule"/>
</dbReference>
<dbReference type="GO" id="GO:0019284">
    <property type="term" value="P:L-methionine salvage from S-adenosylmethionine"/>
    <property type="evidence" value="ECO:0007669"/>
    <property type="project" value="InterPro"/>
</dbReference>
<dbReference type="CDD" id="cd02232">
    <property type="entry name" value="cupin_ARD"/>
    <property type="match status" value="1"/>
</dbReference>
<dbReference type="Gene3D" id="2.60.120.10">
    <property type="entry name" value="Jelly Rolls"/>
    <property type="match status" value="1"/>
</dbReference>
<dbReference type="HAMAP" id="MF_01682">
    <property type="entry name" value="Salvage_MtnD"/>
    <property type="match status" value="1"/>
</dbReference>
<dbReference type="InterPro" id="IPR004313">
    <property type="entry name" value="ARD"/>
</dbReference>
<dbReference type="InterPro" id="IPR023956">
    <property type="entry name" value="ARD_bac"/>
</dbReference>
<dbReference type="InterPro" id="IPR014710">
    <property type="entry name" value="RmlC-like_jellyroll"/>
</dbReference>
<dbReference type="InterPro" id="IPR011051">
    <property type="entry name" value="RmlC_Cupin_sf"/>
</dbReference>
<dbReference type="PANTHER" id="PTHR23418">
    <property type="entry name" value="ACIREDUCTONE DIOXYGENASE"/>
    <property type="match status" value="1"/>
</dbReference>
<dbReference type="PANTHER" id="PTHR23418:SF0">
    <property type="entry name" value="ACIREDUCTONE DIOXYGENASE"/>
    <property type="match status" value="1"/>
</dbReference>
<dbReference type="Pfam" id="PF03079">
    <property type="entry name" value="ARD"/>
    <property type="match status" value="1"/>
</dbReference>
<dbReference type="SUPFAM" id="SSF51182">
    <property type="entry name" value="RmlC-like cupins"/>
    <property type="match status" value="1"/>
</dbReference>
<feature type="chain" id="PRO_0000359214" description="Acireductone dioxygenase">
    <location>
        <begin position="1"/>
        <end position="184"/>
    </location>
</feature>
<feature type="binding site" evidence="1">
    <location>
        <position position="97"/>
    </location>
    <ligand>
        <name>Fe(2+)</name>
        <dbReference type="ChEBI" id="CHEBI:29033"/>
    </ligand>
</feature>
<feature type="binding site" evidence="1">
    <location>
        <position position="97"/>
    </location>
    <ligand>
        <name>Ni(2+)</name>
        <dbReference type="ChEBI" id="CHEBI:49786"/>
    </ligand>
</feature>
<feature type="binding site" evidence="1">
    <location>
        <position position="99"/>
    </location>
    <ligand>
        <name>Fe(2+)</name>
        <dbReference type="ChEBI" id="CHEBI:29033"/>
    </ligand>
</feature>
<feature type="binding site" evidence="1">
    <location>
        <position position="99"/>
    </location>
    <ligand>
        <name>Ni(2+)</name>
        <dbReference type="ChEBI" id="CHEBI:49786"/>
    </ligand>
</feature>
<feature type="binding site" evidence="1">
    <location>
        <position position="103"/>
    </location>
    <ligand>
        <name>Fe(2+)</name>
        <dbReference type="ChEBI" id="CHEBI:29033"/>
    </ligand>
</feature>
<feature type="binding site" evidence="1">
    <location>
        <position position="103"/>
    </location>
    <ligand>
        <name>Ni(2+)</name>
        <dbReference type="ChEBI" id="CHEBI:49786"/>
    </ligand>
</feature>
<feature type="binding site" evidence="1">
    <location>
        <position position="141"/>
    </location>
    <ligand>
        <name>Fe(2+)</name>
        <dbReference type="ChEBI" id="CHEBI:29033"/>
    </ligand>
</feature>
<feature type="binding site" evidence="1">
    <location>
        <position position="141"/>
    </location>
    <ligand>
        <name>Ni(2+)</name>
        <dbReference type="ChEBI" id="CHEBI:49786"/>
    </ligand>
</feature>
<feature type="site" description="May play a role in metal incorporation in vivo" evidence="1">
    <location>
        <position position="96"/>
    </location>
</feature>
<feature type="site" description="May play a role in transmitting local conformational changes" evidence="1">
    <location>
        <position position="102"/>
    </location>
</feature>
<feature type="site" description="Important to generate the dianion" evidence="1">
    <location>
        <position position="105"/>
    </location>
</feature>
<comment type="function">
    <text evidence="1">Catalyzes 2 different reactions between oxygen and the acireductone 1,2-dihydroxy-3-keto-5-methylthiopentene (DHK-MTPene) depending upon the metal bound in the active site. Fe-containing acireductone dioxygenase (Fe-ARD) produces formate and 2-keto-4-methylthiobutyrate (KMTB), the alpha-ketoacid precursor of methionine in the methionine recycle pathway. Ni-containing acireductone dioxygenase (Ni-ARD) produces methylthiopropionate, carbon monoxide and formate, and does not lie on the methionine recycle pathway.</text>
</comment>
<comment type="catalytic activity">
    <reaction evidence="1">
        <text>1,2-dihydroxy-5-(methylsulfanyl)pent-1-en-3-one + O2 = 3-(methylsulfanyl)propanoate + CO + formate + 2 H(+)</text>
        <dbReference type="Rhea" id="RHEA:14161"/>
        <dbReference type="ChEBI" id="CHEBI:15378"/>
        <dbReference type="ChEBI" id="CHEBI:15379"/>
        <dbReference type="ChEBI" id="CHEBI:15740"/>
        <dbReference type="ChEBI" id="CHEBI:17245"/>
        <dbReference type="ChEBI" id="CHEBI:49016"/>
        <dbReference type="ChEBI" id="CHEBI:49252"/>
        <dbReference type="EC" id="1.13.11.53"/>
    </reaction>
</comment>
<comment type="catalytic activity">
    <reaction evidence="1">
        <text>1,2-dihydroxy-5-(methylsulfanyl)pent-1-en-3-one + O2 = 4-methylsulfanyl-2-oxobutanoate + formate + 2 H(+)</text>
        <dbReference type="Rhea" id="RHEA:24504"/>
        <dbReference type="ChEBI" id="CHEBI:15378"/>
        <dbReference type="ChEBI" id="CHEBI:15379"/>
        <dbReference type="ChEBI" id="CHEBI:15740"/>
        <dbReference type="ChEBI" id="CHEBI:16723"/>
        <dbReference type="ChEBI" id="CHEBI:49252"/>
        <dbReference type="EC" id="1.13.11.54"/>
    </reaction>
</comment>
<comment type="cofactor">
    <cofactor evidence="1">
        <name>Fe(2+)</name>
        <dbReference type="ChEBI" id="CHEBI:29033"/>
    </cofactor>
    <text evidence="1">Binds 1 Fe(2+) cation per monomer.</text>
</comment>
<comment type="cofactor">
    <cofactor evidence="1">
        <name>Ni(2+)</name>
        <dbReference type="ChEBI" id="CHEBI:49786"/>
    </cofactor>
    <text evidence="1">Binds 1 nickel ion per monomer.</text>
</comment>
<comment type="pathway">
    <text evidence="1">Amino-acid biosynthesis; L-methionine biosynthesis via salvage pathway; L-methionine from S-methyl-5-thio-alpha-D-ribose 1-phosphate: step 5/6.</text>
</comment>
<comment type="subunit">
    <text evidence="1">Monomer.</text>
</comment>
<comment type="similarity">
    <text evidence="1">Belongs to the acireductone dioxygenase (ARD) family.</text>
</comment>
<reference key="1">
    <citation type="journal article" date="2011" name="Stand. Genomic Sci.">
        <title>Complete genome sequence of Parvibaculum lavamentivorans type strain (DS-1(T)).</title>
        <authorList>
            <person name="Schleheck D."/>
            <person name="Weiss M."/>
            <person name="Pitluck S."/>
            <person name="Bruce D."/>
            <person name="Land M.L."/>
            <person name="Han S."/>
            <person name="Saunders E."/>
            <person name="Tapia R."/>
            <person name="Detter C."/>
            <person name="Brettin T."/>
            <person name="Han J."/>
            <person name="Woyke T."/>
            <person name="Goodwin L."/>
            <person name="Pennacchio L."/>
            <person name="Nolan M."/>
            <person name="Cook A.M."/>
            <person name="Kjelleberg S."/>
            <person name="Thomas T."/>
        </authorList>
    </citation>
    <scope>NUCLEOTIDE SEQUENCE [LARGE SCALE GENOMIC DNA]</scope>
    <source>
        <strain>DS-1 / DSM 13023 / NCIMB 13966</strain>
    </source>
</reference>
<accession>A7HU87</accession>
<gene>
    <name evidence="1" type="primary">mtnD</name>
    <name type="ordered locus">Plav_1853</name>
</gene>
<evidence type="ECO:0000255" key="1">
    <source>
        <dbReference type="HAMAP-Rule" id="MF_01682"/>
    </source>
</evidence>
<keyword id="KW-0028">Amino-acid biosynthesis</keyword>
<keyword id="KW-0223">Dioxygenase</keyword>
<keyword id="KW-0408">Iron</keyword>
<keyword id="KW-0479">Metal-binding</keyword>
<keyword id="KW-0486">Methionine biosynthesis</keyword>
<keyword id="KW-0533">Nickel</keyword>
<keyword id="KW-0560">Oxidoreductase</keyword>
<keyword id="KW-1185">Reference proteome</keyword>
<protein>
    <recommendedName>
        <fullName evidence="1">Acireductone dioxygenase</fullName>
    </recommendedName>
    <alternativeName>
        <fullName evidence="1">1,2-dihydroxy-3-keto-5-methylthiopentene dioxygenase</fullName>
        <shortName evidence="1">DHK-MTPene dioxygenase</shortName>
    </alternativeName>
    <alternativeName>
        <fullName evidence="1">Acireductone dioxygenase (Fe(2+)-requiring)</fullName>
        <shortName evidence="1">ARD'</shortName>
        <shortName evidence="1">Fe-ARD</shortName>
        <ecNumber evidence="1">1.13.11.54</ecNumber>
    </alternativeName>
    <alternativeName>
        <fullName evidence="1">Acireductone dioxygenase (Ni(2+)-requiring)</fullName>
        <shortName evidence="1">ARD</shortName>
        <shortName evidence="1">Ni-ARD</shortName>
        <ecNumber evidence="1">1.13.11.53</ecNumber>
    </alternativeName>
</protein>
<organism>
    <name type="scientific">Parvibaculum lavamentivorans (strain DS-1 / DSM 13023 / NCIMB 13966)</name>
    <dbReference type="NCBI Taxonomy" id="402881"/>
    <lineage>
        <taxon>Bacteria</taxon>
        <taxon>Pseudomonadati</taxon>
        <taxon>Pseudomonadota</taxon>
        <taxon>Alphaproteobacteria</taxon>
        <taxon>Hyphomicrobiales</taxon>
        <taxon>Parvibaculaceae</taxon>
        <taxon>Parvibaculum</taxon>
    </lineage>
</organism>
<name>MTND_PARL1</name>
<proteinExistence type="inferred from homology"/>
<sequence>MTHLTVYPDTDPATVLLDTRDGAEIAASLSGIGVVFERWDAPHALGEDADQTAVLAAYEADVKRLMDEGGYKSVDVVRVKPDNPNRAEMRQKFLAEHTHDDDEVRFFVEGAGAFYLRKDGRVYRVVCERNDLISVPAGTTHWFDTGAAPHFCAIRIFTSPEGWVGHFTGDDIATRFPKFESEPQ</sequence>